<dbReference type="EMBL" id="AM902716">
    <property type="protein sequence ID" value="CAP45278.1"/>
    <property type="molecule type" value="Genomic_DNA"/>
</dbReference>
<dbReference type="SMR" id="A9IHR9"/>
<dbReference type="STRING" id="94624.Bpet4926"/>
<dbReference type="KEGG" id="bpt:Bpet4926"/>
<dbReference type="eggNOG" id="COG0100">
    <property type="taxonomic scope" value="Bacteria"/>
</dbReference>
<dbReference type="Proteomes" id="UP000001225">
    <property type="component" value="Chromosome"/>
</dbReference>
<dbReference type="GO" id="GO:1990904">
    <property type="term" value="C:ribonucleoprotein complex"/>
    <property type="evidence" value="ECO:0007669"/>
    <property type="project" value="UniProtKB-KW"/>
</dbReference>
<dbReference type="GO" id="GO:0005840">
    <property type="term" value="C:ribosome"/>
    <property type="evidence" value="ECO:0007669"/>
    <property type="project" value="UniProtKB-KW"/>
</dbReference>
<dbReference type="GO" id="GO:0019843">
    <property type="term" value="F:rRNA binding"/>
    <property type="evidence" value="ECO:0007669"/>
    <property type="project" value="UniProtKB-UniRule"/>
</dbReference>
<dbReference type="GO" id="GO:0003735">
    <property type="term" value="F:structural constituent of ribosome"/>
    <property type="evidence" value="ECO:0007669"/>
    <property type="project" value="InterPro"/>
</dbReference>
<dbReference type="GO" id="GO:0006412">
    <property type="term" value="P:translation"/>
    <property type="evidence" value="ECO:0007669"/>
    <property type="project" value="UniProtKB-UniRule"/>
</dbReference>
<dbReference type="FunFam" id="3.30.420.80:FF:000001">
    <property type="entry name" value="30S ribosomal protein S11"/>
    <property type="match status" value="1"/>
</dbReference>
<dbReference type="Gene3D" id="3.30.420.80">
    <property type="entry name" value="Ribosomal protein S11"/>
    <property type="match status" value="1"/>
</dbReference>
<dbReference type="HAMAP" id="MF_01310">
    <property type="entry name" value="Ribosomal_uS11"/>
    <property type="match status" value="1"/>
</dbReference>
<dbReference type="InterPro" id="IPR001971">
    <property type="entry name" value="Ribosomal_uS11"/>
</dbReference>
<dbReference type="InterPro" id="IPR019981">
    <property type="entry name" value="Ribosomal_uS11_bac-type"/>
</dbReference>
<dbReference type="InterPro" id="IPR018102">
    <property type="entry name" value="Ribosomal_uS11_CS"/>
</dbReference>
<dbReference type="InterPro" id="IPR036967">
    <property type="entry name" value="Ribosomal_uS11_sf"/>
</dbReference>
<dbReference type="NCBIfam" id="NF003698">
    <property type="entry name" value="PRK05309.1"/>
    <property type="match status" value="1"/>
</dbReference>
<dbReference type="NCBIfam" id="TIGR03632">
    <property type="entry name" value="uS11_bact"/>
    <property type="match status" value="1"/>
</dbReference>
<dbReference type="PANTHER" id="PTHR11759">
    <property type="entry name" value="40S RIBOSOMAL PROTEIN S14/30S RIBOSOMAL PROTEIN S11"/>
    <property type="match status" value="1"/>
</dbReference>
<dbReference type="Pfam" id="PF00411">
    <property type="entry name" value="Ribosomal_S11"/>
    <property type="match status" value="1"/>
</dbReference>
<dbReference type="PIRSF" id="PIRSF002131">
    <property type="entry name" value="Ribosomal_S11"/>
    <property type="match status" value="1"/>
</dbReference>
<dbReference type="SUPFAM" id="SSF53137">
    <property type="entry name" value="Translational machinery components"/>
    <property type="match status" value="1"/>
</dbReference>
<dbReference type="PROSITE" id="PS00054">
    <property type="entry name" value="RIBOSOMAL_S11"/>
    <property type="match status" value="1"/>
</dbReference>
<sequence>MAKASTSGASRVRKKVKKNVSDGIAHVHASFNNTIITITDRQGNALSWATSGGAGFKGSRKSTPFAAQVAAETAGRVALEYGIKTLEVRIKGPGPGRESSVRALNALGIKISSIADITPVPHNGCRPPKRRRI</sequence>
<evidence type="ECO:0000255" key="1">
    <source>
        <dbReference type="HAMAP-Rule" id="MF_01310"/>
    </source>
</evidence>
<evidence type="ECO:0000305" key="2"/>
<name>RS11_BORPD</name>
<protein>
    <recommendedName>
        <fullName evidence="1">Small ribosomal subunit protein uS11</fullName>
    </recommendedName>
    <alternativeName>
        <fullName evidence="2">30S ribosomal protein S11</fullName>
    </alternativeName>
</protein>
<comment type="function">
    <text evidence="1">Located on the platform of the 30S subunit, it bridges several disparate RNA helices of the 16S rRNA. Forms part of the Shine-Dalgarno cleft in the 70S ribosome.</text>
</comment>
<comment type="subunit">
    <text evidence="1">Part of the 30S ribosomal subunit. Interacts with proteins S7 and S18. Binds to IF-3.</text>
</comment>
<comment type="similarity">
    <text evidence="1">Belongs to the universal ribosomal protein uS11 family.</text>
</comment>
<keyword id="KW-0687">Ribonucleoprotein</keyword>
<keyword id="KW-0689">Ribosomal protein</keyword>
<keyword id="KW-0694">RNA-binding</keyword>
<keyword id="KW-0699">rRNA-binding</keyword>
<accession>A9IHR9</accession>
<proteinExistence type="inferred from homology"/>
<reference key="1">
    <citation type="journal article" date="2008" name="BMC Genomics">
        <title>The missing link: Bordetella petrii is endowed with both the metabolic versatility of environmental bacteria and virulence traits of pathogenic Bordetellae.</title>
        <authorList>
            <person name="Gross R."/>
            <person name="Guzman C.A."/>
            <person name="Sebaihia M."/>
            <person name="Martin dos Santos V.A.P."/>
            <person name="Pieper D.H."/>
            <person name="Koebnik R."/>
            <person name="Lechner M."/>
            <person name="Bartels D."/>
            <person name="Buhrmester J."/>
            <person name="Choudhuri J.V."/>
            <person name="Ebensen T."/>
            <person name="Gaigalat L."/>
            <person name="Herrmann S."/>
            <person name="Khachane A.N."/>
            <person name="Larisch C."/>
            <person name="Link S."/>
            <person name="Linke B."/>
            <person name="Meyer F."/>
            <person name="Mormann S."/>
            <person name="Nakunst D."/>
            <person name="Rueckert C."/>
            <person name="Schneiker-Bekel S."/>
            <person name="Schulze K."/>
            <person name="Voerholter F.-J."/>
            <person name="Yevsa T."/>
            <person name="Engle J.T."/>
            <person name="Goldman W.E."/>
            <person name="Puehler A."/>
            <person name="Goebel U.B."/>
            <person name="Goesmann A."/>
            <person name="Bloecker H."/>
            <person name="Kaiser O."/>
            <person name="Martinez-Arias R."/>
        </authorList>
    </citation>
    <scope>NUCLEOTIDE SEQUENCE [LARGE SCALE GENOMIC DNA]</scope>
    <source>
        <strain>ATCC BAA-461 / DSM 12804 / CCUG 43448</strain>
    </source>
</reference>
<gene>
    <name evidence="1" type="primary">rpsK</name>
    <name type="ordered locus">Bpet4926</name>
</gene>
<feature type="chain" id="PRO_1000141059" description="Small ribosomal subunit protein uS11">
    <location>
        <begin position="1"/>
        <end position="133"/>
    </location>
</feature>
<organism>
    <name type="scientific">Bordetella petrii (strain ATCC BAA-461 / DSM 12804 / CCUG 43448)</name>
    <dbReference type="NCBI Taxonomy" id="340100"/>
    <lineage>
        <taxon>Bacteria</taxon>
        <taxon>Pseudomonadati</taxon>
        <taxon>Pseudomonadota</taxon>
        <taxon>Betaproteobacteria</taxon>
        <taxon>Burkholderiales</taxon>
        <taxon>Alcaligenaceae</taxon>
        <taxon>Bordetella</taxon>
    </lineage>
</organism>